<protein>
    <recommendedName>
        <fullName evidence="6">Pre-mRNA cleavage complex 2 protein Pcf11</fullName>
    </recommendedName>
    <alternativeName>
        <fullName evidence="6">Pre-mRNA cleavage complex II protein Pcf11</fullName>
    </alternativeName>
</protein>
<evidence type="ECO:0000250" key="1">
    <source>
        <dbReference type="UniProtKB" id="O94913"/>
    </source>
</evidence>
<evidence type="ECO:0000255" key="2"/>
<evidence type="ECO:0000255" key="3">
    <source>
        <dbReference type="PROSITE-ProRule" id="PRU00724"/>
    </source>
</evidence>
<evidence type="ECO:0000256" key="4">
    <source>
        <dbReference type="SAM" id="MobiDB-lite"/>
    </source>
</evidence>
<evidence type="ECO:0000303" key="5">
    <source>
    </source>
</evidence>
<evidence type="ECO:0000305" key="6"/>
<evidence type="ECO:0000312" key="7">
    <source>
        <dbReference type="MGI" id="MGI:1919579"/>
    </source>
</evidence>
<keyword id="KW-0007">Acetylation</keyword>
<keyword id="KW-0175">Coiled coil</keyword>
<keyword id="KW-1017">Isopeptide bond</keyword>
<keyword id="KW-0488">Methylation</keyword>
<keyword id="KW-0507">mRNA processing</keyword>
<keyword id="KW-0539">Nucleus</keyword>
<keyword id="KW-0597">Phosphoprotein</keyword>
<keyword id="KW-1185">Reference proteome</keyword>
<keyword id="KW-0832">Ubl conjugation</keyword>
<reference key="1">
    <citation type="journal article" date="2004" name="DNA Res.">
        <title>Prediction of the coding sequences of mouse homologues of KIAA gene: IV. The complete nucleotide sequences of 500 mouse KIAA-homologous cDNAs identified by screening of terminal sequences of cDNA clones randomly sampled from size-fractionated libraries.</title>
        <authorList>
            <person name="Okazaki N."/>
            <person name="Kikuno R."/>
            <person name="Ohara R."/>
            <person name="Inamoto S."/>
            <person name="Koseki H."/>
            <person name="Hiraoka S."/>
            <person name="Saga Y."/>
            <person name="Seino S."/>
            <person name="Nishimura M."/>
            <person name="Kaisho T."/>
            <person name="Hoshino K."/>
            <person name="Kitamura H."/>
            <person name="Nagase T."/>
            <person name="Ohara O."/>
            <person name="Koga H."/>
        </authorList>
    </citation>
    <scope>NUCLEOTIDE SEQUENCE [LARGE SCALE MRNA]</scope>
    <source>
        <tissue>Thymus</tissue>
    </source>
</reference>
<reference key="2">
    <citation type="journal article" date="2009" name="PLoS Biol.">
        <title>Lineage-specific biology revealed by a finished genome assembly of the mouse.</title>
        <authorList>
            <person name="Church D.M."/>
            <person name="Goodstadt L."/>
            <person name="Hillier L.W."/>
            <person name="Zody M.C."/>
            <person name="Goldstein S."/>
            <person name="She X."/>
            <person name="Bult C.J."/>
            <person name="Agarwala R."/>
            <person name="Cherry J.L."/>
            <person name="DiCuccio M."/>
            <person name="Hlavina W."/>
            <person name="Kapustin Y."/>
            <person name="Meric P."/>
            <person name="Maglott D."/>
            <person name="Birtle Z."/>
            <person name="Marques A.C."/>
            <person name="Graves T."/>
            <person name="Zhou S."/>
            <person name="Teague B."/>
            <person name="Potamousis K."/>
            <person name="Churas C."/>
            <person name="Place M."/>
            <person name="Herschleb J."/>
            <person name="Runnheim R."/>
            <person name="Forrest D."/>
            <person name="Amos-Landgraf J."/>
            <person name="Schwartz D.C."/>
            <person name="Cheng Z."/>
            <person name="Lindblad-Toh K."/>
            <person name="Eichler E.E."/>
            <person name="Ponting C.P."/>
        </authorList>
    </citation>
    <scope>NUCLEOTIDE SEQUENCE [LARGE SCALE GENOMIC DNA]</scope>
    <source>
        <strain>C57BL/6J</strain>
    </source>
</reference>
<reference key="3">
    <citation type="journal article" date="2004" name="Genome Res.">
        <title>The status, quality, and expansion of the NIH full-length cDNA project: the Mammalian Gene Collection (MGC).</title>
        <authorList>
            <consortium name="The MGC Project Team"/>
        </authorList>
    </citation>
    <scope>NUCLEOTIDE SEQUENCE [LARGE SCALE MRNA]</scope>
    <source>
        <tissue>Brain</tissue>
    </source>
</reference>
<reference key="4">
    <citation type="journal article" date="2005" name="Science">
        <title>The transcriptional landscape of the mammalian genome.</title>
        <authorList>
            <person name="Carninci P."/>
            <person name="Kasukawa T."/>
            <person name="Katayama S."/>
            <person name="Gough J."/>
            <person name="Frith M.C."/>
            <person name="Maeda N."/>
            <person name="Oyama R."/>
            <person name="Ravasi T."/>
            <person name="Lenhard B."/>
            <person name="Wells C."/>
            <person name="Kodzius R."/>
            <person name="Shimokawa K."/>
            <person name="Bajic V.B."/>
            <person name="Brenner S.E."/>
            <person name="Batalov S."/>
            <person name="Forrest A.R."/>
            <person name="Zavolan M."/>
            <person name="Davis M.J."/>
            <person name="Wilming L.G."/>
            <person name="Aidinis V."/>
            <person name="Allen J.E."/>
            <person name="Ambesi-Impiombato A."/>
            <person name="Apweiler R."/>
            <person name="Aturaliya R.N."/>
            <person name="Bailey T.L."/>
            <person name="Bansal M."/>
            <person name="Baxter L."/>
            <person name="Beisel K.W."/>
            <person name="Bersano T."/>
            <person name="Bono H."/>
            <person name="Chalk A.M."/>
            <person name="Chiu K.P."/>
            <person name="Choudhary V."/>
            <person name="Christoffels A."/>
            <person name="Clutterbuck D.R."/>
            <person name="Crowe M.L."/>
            <person name="Dalla E."/>
            <person name="Dalrymple B.P."/>
            <person name="de Bono B."/>
            <person name="Della Gatta G."/>
            <person name="di Bernardo D."/>
            <person name="Down T."/>
            <person name="Engstrom P."/>
            <person name="Fagiolini M."/>
            <person name="Faulkner G."/>
            <person name="Fletcher C.F."/>
            <person name="Fukushima T."/>
            <person name="Furuno M."/>
            <person name="Futaki S."/>
            <person name="Gariboldi M."/>
            <person name="Georgii-Hemming P."/>
            <person name="Gingeras T.R."/>
            <person name="Gojobori T."/>
            <person name="Green R.E."/>
            <person name="Gustincich S."/>
            <person name="Harbers M."/>
            <person name="Hayashi Y."/>
            <person name="Hensch T.K."/>
            <person name="Hirokawa N."/>
            <person name="Hill D."/>
            <person name="Huminiecki L."/>
            <person name="Iacono M."/>
            <person name="Ikeo K."/>
            <person name="Iwama A."/>
            <person name="Ishikawa T."/>
            <person name="Jakt M."/>
            <person name="Kanapin A."/>
            <person name="Katoh M."/>
            <person name="Kawasawa Y."/>
            <person name="Kelso J."/>
            <person name="Kitamura H."/>
            <person name="Kitano H."/>
            <person name="Kollias G."/>
            <person name="Krishnan S.P."/>
            <person name="Kruger A."/>
            <person name="Kummerfeld S.K."/>
            <person name="Kurochkin I.V."/>
            <person name="Lareau L.F."/>
            <person name="Lazarevic D."/>
            <person name="Lipovich L."/>
            <person name="Liu J."/>
            <person name="Liuni S."/>
            <person name="McWilliam S."/>
            <person name="Madan Babu M."/>
            <person name="Madera M."/>
            <person name="Marchionni L."/>
            <person name="Matsuda H."/>
            <person name="Matsuzawa S."/>
            <person name="Miki H."/>
            <person name="Mignone F."/>
            <person name="Miyake S."/>
            <person name="Morris K."/>
            <person name="Mottagui-Tabar S."/>
            <person name="Mulder N."/>
            <person name="Nakano N."/>
            <person name="Nakauchi H."/>
            <person name="Ng P."/>
            <person name="Nilsson R."/>
            <person name="Nishiguchi S."/>
            <person name="Nishikawa S."/>
            <person name="Nori F."/>
            <person name="Ohara O."/>
            <person name="Okazaki Y."/>
            <person name="Orlando V."/>
            <person name="Pang K.C."/>
            <person name="Pavan W.J."/>
            <person name="Pavesi G."/>
            <person name="Pesole G."/>
            <person name="Petrovsky N."/>
            <person name="Piazza S."/>
            <person name="Reed J."/>
            <person name="Reid J.F."/>
            <person name="Ring B.Z."/>
            <person name="Ringwald M."/>
            <person name="Rost B."/>
            <person name="Ruan Y."/>
            <person name="Salzberg S.L."/>
            <person name="Sandelin A."/>
            <person name="Schneider C."/>
            <person name="Schoenbach C."/>
            <person name="Sekiguchi K."/>
            <person name="Semple C.A."/>
            <person name="Seno S."/>
            <person name="Sessa L."/>
            <person name="Sheng Y."/>
            <person name="Shibata Y."/>
            <person name="Shimada H."/>
            <person name="Shimada K."/>
            <person name="Silva D."/>
            <person name="Sinclair B."/>
            <person name="Sperling S."/>
            <person name="Stupka E."/>
            <person name="Sugiura K."/>
            <person name="Sultana R."/>
            <person name="Takenaka Y."/>
            <person name="Taki K."/>
            <person name="Tammoja K."/>
            <person name="Tan S.L."/>
            <person name="Tang S."/>
            <person name="Taylor M.S."/>
            <person name="Tegner J."/>
            <person name="Teichmann S.A."/>
            <person name="Ueda H.R."/>
            <person name="van Nimwegen E."/>
            <person name="Verardo R."/>
            <person name="Wei C.L."/>
            <person name="Yagi K."/>
            <person name="Yamanishi H."/>
            <person name="Zabarovsky E."/>
            <person name="Zhu S."/>
            <person name="Zimmer A."/>
            <person name="Hide W."/>
            <person name="Bult C."/>
            <person name="Grimmond S.M."/>
            <person name="Teasdale R.D."/>
            <person name="Liu E.T."/>
            <person name="Brusic V."/>
            <person name="Quackenbush J."/>
            <person name="Wahlestedt C."/>
            <person name="Mattick J.S."/>
            <person name="Hume D.A."/>
            <person name="Kai C."/>
            <person name="Sasaki D."/>
            <person name="Tomaru Y."/>
            <person name="Fukuda S."/>
            <person name="Kanamori-Katayama M."/>
            <person name="Suzuki M."/>
            <person name="Aoki J."/>
            <person name="Arakawa T."/>
            <person name="Iida J."/>
            <person name="Imamura K."/>
            <person name="Itoh M."/>
            <person name="Kato T."/>
            <person name="Kawaji H."/>
            <person name="Kawagashira N."/>
            <person name="Kawashima T."/>
            <person name="Kojima M."/>
            <person name="Kondo S."/>
            <person name="Konno H."/>
            <person name="Nakano K."/>
            <person name="Ninomiya N."/>
            <person name="Nishio T."/>
            <person name="Okada M."/>
            <person name="Plessy C."/>
            <person name="Shibata K."/>
            <person name="Shiraki T."/>
            <person name="Suzuki S."/>
            <person name="Tagami M."/>
            <person name="Waki K."/>
            <person name="Watahiki A."/>
            <person name="Okamura-Oho Y."/>
            <person name="Suzuki H."/>
            <person name="Kawai J."/>
            <person name="Hayashizaki Y."/>
        </authorList>
    </citation>
    <scope>NUCLEOTIDE SEQUENCE [LARGE SCALE MRNA] OF 93-428</scope>
    <source>
        <strain>C57BL/6J</strain>
        <tissue>Testis</tissue>
    </source>
</reference>
<organism>
    <name type="scientific">Mus musculus</name>
    <name type="common">Mouse</name>
    <dbReference type="NCBI Taxonomy" id="10090"/>
    <lineage>
        <taxon>Eukaryota</taxon>
        <taxon>Metazoa</taxon>
        <taxon>Chordata</taxon>
        <taxon>Craniata</taxon>
        <taxon>Vertebrata</taxon>
        <taxon>Euteleostomi</taxon>
        <taxon>Mammalia</taxon>
        <taxon>Eutheria</taxon>
        <taxon>Euarchontoglires</taxon>
        <taxon>Glires</taxon>
        <taxon>Rodentia</taxon>
        <taxon>Myomorpha</taxon>
        <taxon>Muroidea</taxon>
        <taxon>Muridae</taxon>
        <taxon>Murinae</taxon>
        <taxon>Mus</taxon>
        <taxon>Mus</taxon>
    </lineage>
</organism>
<name>PCF11_MOUSE</name>
<dbReference type="EMBL" id="AK173035">
    <property type="protein sequence ID" value="BAD32313.1"/>
    <property type="status" value="ALT_INIT"/>
    <property type="molecule type" value="mRNA"/>
</dbReference>
<dbReference type="EMBL" id="BC004648">
    <property type="protein sequence ID" value="AAH04648.1"/>
    <property type="molecule type" value="mRNA"/>
</dbReference>
<dbReference type="EMBL" id="BC027361">
    <property type="protein sequence ID" value="AAH27361.1"/>
    <property type="molecule type" value="mRNA"/>
</dbReference>
<dbReference type="EMBL" id="BC030492">
    <property type="protein sequence ID" value="AAH30492.1"/>
    <property type="status" value="ALT_INIT"/>
    <property type="molecule type" value="mRNA"/>
</dbReference>
<dbReference type="EMBL" id="BC150781">
    <property type="protein sequence ID" value="AAI50782.1"/>
    <property type="molecule type" value="mRNA"/>
</dbReference>
<dbReference type="EMBL" id="AK161260">
    <property type="protein sequence ID" value="BAE36275.1"/>
    <property type="status" value="ALT_INIT"/>
    <property type="molecule type" value="mRNA"/>
</dbReference>
<dbReference type="EMBL" id="AK161614">
    <property type="protein sequence ID" value="BAE36493.1"/>
    <property type="status" value="ALT_INIT"/>
    <property type="molecule type" value="mRNA"/>
</dbReference>
<dbReference type="CCDS" id="CCDS52311.1"/>
<dbReference type="RefSeq" id="NP_083354.3">
    <property type="nucleotide sequence ID" value="NM_029078.3"/>
</dbReference>
<dbReference type="SMR" id="G3X9Z4"/>
<dbReference type="FunCoup" id="G3X9Z4">
    <property type="interactions" value="4891"/>
</dbReference>
<dbReference type="STRING" id="10090.ENSMUSP00000113717"/>
<dbReference type="GlyGen" id="G3X9Z4">
    <property type="glycosylation" value="1 site"/>
</dbReference>
<dbReference type="iPTMnet" id="G3X9Z4"/>
<dbReference type="PhosphoSitePlus" id="G3X9Z4"/>
<dbReference type="jPOST" id="G3X9Z4"/>
<dbReference type="PaxDb" id="10090-ENSMUSP00000113717"/>
<dbReference type="PeptideAtlas" id="G3X9Z4"/>
<dbReference type="ProteomicsDB" id="330505"/>
<dbReference type="ProteomicsDB" id="371751"/>
<dbReference type="Antibodypedia" id="48189">
    <property type="antibodies" value="78 antibodies from 22 providers"/>
</dbReference>
<dbReference type="DNASU" id="74737"/>
<dbReference type="Ensembl" id="ENSMUST00000119954.9">
    <property type="protein sequence ID" value="ENSMUSP00000113717.2"/>
    <property type="gene ID" value="ENSMUSG00000041328.17"/>
</dbReference>
<dbReference type="GeneID" id="74737"/>
<dbReference type="KEGG" id="mmu:74737"/>
<dbReference type="UCSC" id="uc009iib.2">
    <property type="organism name" value="mouse"/>
</dbReference>
<dbReference type="UCSC" id="uc009iic.2">
    <property type="organism name" value="mouse"/>
</dbReference>
<dbReference type="AGR" id="MGI:1919579"/>
<dbReference type="CTD" id="51585"/>
<dbReference type="MGI" id="MGI:1919579">
    <property type="gene designation" value="Pcf11"/>
</dbReference>
<dbReference type="VEuPathDB" id="HostDB:ENSMUSG00000041328"/>
<dbReference type="eggNOG" id="KOG2071">
    <property type="taxonomic scope" value="Eukaryota"/>
</dbReference>
<dbReference type="GeneTree" id="ENSGT00440000034259"/>
<dbReference type="HOGENOM" id="CLU_000976_0_0_1"/>
<dbReference type="InParanoid" id="G3X9Z4"/>
<dbReference type="OMA" id="QSVGGMR"/>
<dbReference type="OrthoDB" id="343582at2759"/>
<dbReference type="TreeFam" id="TF350069"/>
<dbReference type="Reactome" id="R-MMU-6807505">
    <property type="pathway name" value="RNA polymerase II transcribes snRNA genes"/>
</dbReference>
<dbReference type="Reactome" id="R-MMU-72187">
    <property type="pathway name" value="mRNA 3'-end processing"/>
</dbReference>
<dbReference type="Reactome" id="R-MMU-72203">
    <property type="pathway name" value="Processing of Capped Intron-Containing Pre-mRNA"/>
</dbReference>
<dbReference type="Reactome" id="R-MMU-73856">
    <property type="pathway name" value="RNA Polymerase II Transcription Termination"/>
</dbReference>
<dbReference type="Reactome" id="R-MMU-77595">
    <property type="pathway name" value="Processing of Intronless Pre-mRNAs"/>
</dbReference>
<dbReference type="BioGRID-ORCS" id="74737">
    <property type="hits" value="18 hits in 79 CRISPR screens"/>
</dbReference>
<dbReference type="ChiTaRS" id="Pcf11">
    <property type="organism name" value="mouse"/>
</dbReference>
<dbReference type="PRO" id="PR:G3X9Z4"/>
<dbReference type="Proteomes" id="UP000000589">
    <property type="component" value="Chromosome 7"/>
</dbReference>
<dbReference type="RNAct" id="G3X9Z4">
    <property type="molecule type" value="protein"/>
</dbReference>
<dbReference type="Bgee" id="ENSMUSG00000041328">
    <property type="expression patterns" value="Expressed in retinal neural layer and 264 other cell types or tissues"/>
</dbReference>
<dbReference type="ExpressionAtlas" id="G3X9Z4">
    <property type="expression patterns" value="baseline and differential"/>
</dbReference>
<dbReference type="GO" id="GO:0005739">
    <property type="term" value="C:mitochondrion"/>
    <property type="evidence" value="ECO:0007669"/>
    <property type="project" value="Ensembl"/>
</dbReference>
<dbReference type="GO" id="GO:0005849">
    <property type="term" value="C:mRNA cleavage factor complex"/>
    <property type="evidence" value="ECO:0007669"/>
    <property type="project" value="InterPro"/>
</dbReference>
<dbReference type="GO" id="GO:0005654">
    <property type="term" value="C:nucleoplasm"/>
    <property type="evidence" value="ECO:0007669"/>
    <property type="project" value="Ensembl"/>
</dbReference>
<dbReference type="GO" id="GO:0005634">
    <property type="term" value="C:nucleus"/>
    <property type="evidence" value="ECO:0000250"/>
    <property type="project" value="UniProtKB"/>
</dbReference>
<dbReference type="GO" id="GO:0003729">
    <property type="term" value="F:mRNA binding"/>
    <property type="evidence" value="ECO:0007669"/>
    <property type="project" value="InterPro"/>
</dbReference>
<dbReference type="GO" id="GO:0000993">
    <property type="term" value="F:RNA polymerase II complex binding"/>
    <property type="evidence" value="ECO:0000250"/>
    <property type="project" value="UniProtKB"/>
</dbReference>
<dbReference type="GO" id="GO:0031124">
    <property type="term" value="P:mRNA 3'-end processing"/>
    <property type="evidence" value="ECO:0007669"/>
    <property type="project" value="InterPro"/>
</dbReference>
<dbReference type="GO" id="GO:0006369">
    <property type="term" value="P:termination of RNA polymerase II transcription"/>
    <property type="evidence" value="ECO:0000250"/>
    <property type="project" value="UniProtKB"/>
</dbReference>
<dbReference type="CDD" id="cd16982">
    <property type="entry name" value="CID_Pcf11"/>
    <property type="match status" value="1"/>
</dbReference>
<dbReference type="FunFam" id="1.25.40.90:FF:000015">
    <property type="entry name" value="Pre-mRNA cleavage complex 2 protein Pcf11"/>
    <property type="match status" value="1"/>
</dbReference>
<dbReference type="Gene3D" id="1.25.40.90">
    <property type="match status" value="1"/>
</dbReference>
<dbReference type="InterPro" id="IPR006569">
    <property type="entry name" value="CID_dom"/>
</dbReference>
<dbReference type="InterPro" id="IPR008942">
    <property type="entry name" value="ENTH_VHS"/>
</dbReference>
<dbReference type="InterPro" id="IPR045154">
    <property type="entry name" value="PCF11-like"/>
</dbReference>
<dbReference type="InterPro" id="IPR054127">
    <property type="entry name" value="Pcf11_C"/>
</dbReference>
<dbReference type="InterPro" id="IPR048832">
    <property type="entry name" value="PCF11_charged"/>
</dbReference>
<dbReference type="InterPro" id="IPR047415">
    <property type="entry name" value="Pcf11_CID"/>
</dbReference>
<dbReference type="InterPro" id="IPR021605">
    <property type="entry name" value="Pcf11_Clp1-ID"/>
</dbReference>
<dbReference type="InterPro" id="IPR048830">
    <property type="entry name" value="PCF11_helical"/>
</dbReference>
<dbReference type="InterPro" id="IPR048829">
    <property type="entry name" value="PCF11_RFEG_rpt"/>
</dbReference>
<dbReference type="PANTHER" id="PTHR15921:SF3">
    <property type="entry name" value="PRE-MRNA CLEAVAGE COMPLEX 2 PROTEIN PCF11"/>
    <property type="match status" value="1"/>
</dbReference>
<dbReference type="PANTHER" id="PTHR15921">
    <property type="entry name" value="PRE-MRNA CLEAVAGE COMPLEX II"/>
    <property type="match status" value="1"/>
</dbReference>
<dbReference type="Pfam" id="PF04818">
    <property type="entry name" value="CID"/>
    <property type="match status" value="1"/>
</dbReference>
<dbReference type="Pfam" id="PF21936">
    <property type="entry name" value="Pcf11_C"/>
    <property type="match status" value="1"/>
</dbReference>
<dbReference type="Pfam" id="PF20827">
    <property type="entry name" value="PCF11_charged"/>
    <property type="match status" value="1"/>
</dbReference>
<dbReference type="Pfam" id="PF20845">
    <property type="entry name" value="Pcf11_helical"/>
    <property type="match status" value="1"/>
</dbReference>
<dbReference type="Pfam" id="PF20844">
    <property type="entry name" value="PCF11_RFEG_rpt"/>
    <property type="match status" value="2"/>
</dbReference>
<dbReference type="Pfam" id="PF11526">
    <property type="entry name" value="Pfc11_Clp1_ID"/>
    <property type="match status" value="1"/>
</dbReference>
<dbReference type="SMART" id="SM00582">
    <property type="entry name" value="RPR"/>
    <property type="match status" value="1"/>
</dbReference>
<dbReference type="SUPFAM" id="SSF48464">
    <property type="entry name" value="ENTH/VHS domain"/>
    <property type="match status" value="1"/>
</dbReference>
<dbReference type="PROSITE" id="PS51391">
    <property type="entry name" value="CID"/>
    <property type="match status" value="1"/>
</dbReference>
<comment type="function">
    <text evidence="1">Component of pre-mRNA cleavage complex II, which promotes transcription termination by RNA polymerase II.</text>
</comment>
<comment type="subunit">
    <text evidence="1">Associates with the phosphorylated CTD domain of POLR2A /RNA polymerase II.</text>
</comment>
<comment type="subcellular location">
    <subcellularLocation>
        <location evidence="1">Nucleus</location>
    </subcellularLocation>
</comment>
<comment type="PTM">
    <text evidence="1">Phosphorylation at Ser-120 and/or Thr-121 by WNK1 weakens its association with POLR2A/RNA polymerase II, promoting transcript release from the chromatin template and mRNA export to the cytoplasm.</text>
</comment>
<comment type="sequence caution" evidence="6">
    <conflict type="erroneous initiation">
        <sequence resource="EMBL-CDS" id="AAH30492"/>
    </conflict>
    <text>Extended N-terminus.</text>
</comment>
<comment type="sequence caution" evidence="6">
    <conflict type="erroneous initiation">
        <sequence resource="EMBL-CDS" id="BAD32313"/>
    </conflict>
    <text>Extended N-terminus.</text>
</comment>
<comment type="sequence caution" evidence="6">
    <conflict type="erroneous initiation">
        <sequence resource="EMBL-CDS" id="BAE36275"/>
    </conflict>
    <text>Extended N-terminus.</text>
</comment>
<comment type="sequence caution" evidence="6">
    <conflict type="erroneous initiation">
        <sequence resource="EMBL-CDS" id="BAE36493"/>
    </conflict>
    <text>Extended N-terminus.</text>
</comment>
<sequence>MSEQTPAEAGAAGAREDACRDYQSSLEDLTFNSKPHINMLTILAEENLPFAKEIVSLIEAQTAKAPSSEKLPVMYLMDSIVKNVGREYLTAFTKNLVATFICVFEKVDENTRKSLFKLRSTWDEIFPLKKLYALDVRVNSLDPAWPIKPLPPNVNTSSIHVNPKFLNKSPDEPSTPGTVVSSPSISTPPIVPDIQKNLTQEQLIRQQLLAKQKQLLELQQKKLELELEQAKAQLAVSLSVQQETANLGPGSVPSKLHVPQIPTMAVKTPHQVPVQPDKSRAGPSLQMQDLKGTNRDPRLNRMSQHSSHGKEQSHRKEFVMNTINQSDIKTSKNVPSEKLNSSKQEKSKSGERITKKELDQLDSKSKSKSKSPSPLKNKLSHTKDLKNQDSESMRLSDMSKRDPRLKKHLQDKAEGKDEDVKEKRKTAEKKEKDEHMKSSEHRVIGSRSKIINGIVQKQDMVTEELEKQGTKPGRSSTRKRSRSRSPKSRSPIIHSPKRRDRRSPKRRQRSMSPNLAPKAGKMRQSGLKQSHMEEFPPPSREERNIKRSAKQDVRDPRRLKKMDEDRPQETAGQHSMKSGGDPKENIENWQSSKSAKRWKSGWEENKSLQQGDEHSKPPHLRHRESWSSTKGILSPRAPKQQHRLSVDANLQIPKELTLASKRELLQKTSERLASGEITQDEFLVVVHQIRQLFQYQEGVREEQRSPFNDRFPLKRPRYEDSDKPFVDGPASRFAGLDTNQRLTALAEDRPLFDGPGRPSVTRDGPAKMIFEGPNKLSPRIDGPPTPGSLRFDGSPGQMGGGGPMRFEGPQGQLGGGCPLRFEGPPGPVGTPLRFEGPIGQGGGGGFRFEGSPSLRFEGSTGGLRFEGPGGQPVGGLRFEGHRGQPVGGLRFEGPHGQPVGSLRFDNPRGQPVGGLRFEGGHGPSGAAIRFDGPHGQPGGGGGIRFEGPLLQQGVGMRFEGPHGQSVAGLRFEGHNQLGGNLRFEGPHGQPGVGIRFEGPIVQQGGGMRFEGPVPGGGLRIEGPLGQGGPRFEGCHSLRFDGQPGQPSLLPRFDGLHGQPGPRFERTGQPGPQRFDGPPGQQVQPRFDGVPQRFDGPQHQQASRFDIPLGLQGTRFDNHPSQRIESFNHSGPYNDPPGNTFNVPSQGLQFQRHEQIFDTPQGPNFNGPHGPGNQNFPNPINRASGHYFDEKNLQSSQFGNFGNLPTPISVGNIQASQQVLTGVAQPVAFGQGQQFLPVHPQNPGAFIQNPSGGLPKAYPDNHLSQVDVNELFSKLLKTGILKLSQPDSATAQVTEAVAQPPPEEDEDQNEDQDVPDLTNFTIEELKQRYDSVINRLYTGIQCYSCGMRFTTSQTDVYADHLDWHYRQNRTEKDVSRKVTHRRWYYSLTDWIEFEEIADLEERAKSQFFEKVHEEVVLKTQEAAKEKEFQSVPAGPAGAVESCEICQEQFEQYWDEEEEEWHLKNAIRVDGKIYHPSCYEDYQNTSSFDCTPSPSKTPVENPLNIMLNIVKNELQEPCESPKVKEEQIDAPPACSEESVATPTEIKTESDTVESV</sequence>
<feature type="initiator methionine" description="Removed" evidence="1">
    <location>
        <position position="1"/>
    </location>
</feature>
<feature type="chain" id="PRO_0000458461" description="Pre-mRNA cleavage complex 2 protein Pcf11">
    <location>
        <begin position="2"/>
        <end position="1553"/>
    </location>
</feature>
<feature type="domain" description="CID" evidence="3">
    <location>
        <begin position="14"/>
        <end position="142"/>
    </location>
</feature>
<feature type="region of interest" description="Disordered" evidence="4">
    <location>
        <begin position="167"/>
        <end position="186"/>
    </location>
</feature>
<feature type="region of interest" description="Disordered" evidence="4">
    <location>
        <begin position="265"/>
        <end position="648"/>
    </location>
</feature>
<feature type="region of interest" description="Disordered" evidence="4">
    <location>
        <begin position="707"/>
        <end position="733"/>
    </location>
</feature>
<feature type="region of interest" description="Disordered" evidence="4">
    <location>
        <begin position="921"/>
        <end position="940"/>
    </location>
</feature>
<feature type="region of interest" description="Disordered" evidence="4">
    <location>
        <begin position="1286"/>
        <end position="1313"/>
    </location>
</feature>
<feature type="region of interest" description="Disordered" evidence="4">
    <location>
        <begin position="1516"/>
        <end position="1553"/>
    </location>
</feature>
<feature type="coiled-coil region" evidence="2">
    <location>
        <begin position="208"/>
        <end position="235"/>
    </location>
</feature>
<feature type="compositionally biased region" description="Low complexity" evidence="4">
    <location>
        <begin position="174"/>
        <end position="186"/>
    </location>
</feature>
<feature type="compositionally biased region" description="Basic and acidic residues" evidence="4">
    <location>
        <begin position="308"/>
        <end position="318"/>
    </location>
</feature>
<feature type="compositionally biased region" description="Polar residues" evidence="4">
    <location>
        <begin position="321"/>
        <end position="342"/>
    </location>
</feature>
<feature type="compositionally biased region" description="Basic and acidic residues" evidence="4">
    <location>
        <begin position="343"/>
        <end position="365"/>
    </location>
</feature>
<feature type="compositionally biased region" description="Basic and acidic residues" evidence="4">
    <location>
        <begin position="381"/>
        <end position="422"/>
    </location>
</feature>
<feature type="compositionally biased region" description="Basic and acidic residues" evidence="4">
    <location>
        <begin position="428"/>
        <end position="443"/>
    </location>
</feature>
<feature type="compositionally biased region" description="Basic residues" evidence="4">
    <location>
        <begin position="476"/>
        <end position="487"/>
    </location>
</feature>
<feature type="compositionally biased region" description="Basic residues" evidence="4">
    <location>
        <begin position="495"/>
        <end position="509"/>
    </location>
</feature>
<feature type="compositionally biased region" description="Basic and acidic residues" evidence="4">
    <location>
        <begin position="530"/>
        <end position="568"/>
    </location>
</feature>
<feature type="compositionally biased region" description="Basic and acidic residues" evidence="4">
    <location>
        <begin position="600"/>
        <end position="616"/>
    </location>
</feature>
<feature type="compositionally biased region" description="Basic and acidic residues" evidence="4">
    <location>
        <begin position="716"/>
        <end position="725"/>
    </location>
</feature>
<feature type="compositionally biased region" description="Acidic residues" evidence="4">
    <location>
        <begin position="1301"/>
        <end position="1313"/>
    </location>
</feature>
<feature type="modified residue" description="N-acetylserine" evidence="1">
    <location>
        <position position="2"/>
    </location>
</feature>
<feature type="modified residue" description="Phosphoserine" evidence="1">
    <location>
        <position position="120"/>
    </location>
</feature>
<feature type="modified residue" description="Phosphothreonine" evidence="1">
    <location>
        <position position="121"/>
    </location>
</feature>
<feature type="modified residue" description="Phosphoserine" evidence="1">
    <location>
        <position position="169"/>
    </location>
</feature>
<feature type="modified residue" description="Phosphoserine" evidence="1">
    <location>
        <position position="182"/>
    </location>
</feature>
<feature type="modified residue" description="Phosphoserine" evidence="1">
    <location>
        <position position="490"/>
    </location>
</feature>
<feature type="modified residue" description="Phosphoserine" evidence="1">
    <location>
        <position position="495"/>
    </location>
</feature>
<feature type="modified residue" description="Phosphoserine" evidence="1">
    <location>
        <position position="510"/>
    </location>
</feature>
<feature type="modified residue" description="Phosphoserine" evidence="1">
    <location>
        <position position="512"/>
    </location>
</feature>
<feature type="modified residue" description="Phosphoserine" evidence="1">
    <location>
        <position position="645"/>
    </location>
</feature>
<feature type="modified residue" description="Phosphoserine" evidence="1">
    <location>
        <position position="705"/>
    </location>
</feature>
<feature type="modified residue" description="Phosphoserine" evidence="1">
    <location>
        <position position="777"/>
    </location>
</feature>
<feature type="modified residue" description="Phosphothreonine" evidence="1">
    <location>
        <position position="785"/>
    </location>
</feature>
<feature type="modified residue" description="Phosphoserine" evidence="1">
    <location>
        <position position="794"/>
    </location>
</feature>
<feature type="modified residue" description="Asymmetric dimethylarginine" evidence="1">
    <location>
        <position position="805"/>
    </location>
</feature>
<feature type="modified residue" description="Asymmetric dimethylarginine" evidence="1">
    <location>
        <position position="820"/>
    </location>
</feature>
<feature type="modified residue" description="Asymmetric dimethylarginine" evidence="1">
    <location>
        <position position="833"/>
    </location>
</feature>
<feature type="modified residue" description="Phosphoserine" evidence="1">
    <location>
        <position position="851"/>
    </location>
</feature>
<feature type="modified residue" description="Asymmetric dimethylarginine" evidence="1">
    <location>
        <position position="929"/>
    </location>
</feature>
<feature type="modified residue" description="Asymmetric dimethylarginine" evidence="1">
    <location>
        <position position="944"/>
    </location>
</feature>
<feature type="modified residue" description="Asymmetric dimethylarginine" evidence="1">
    <location>
        <position position="957"/>
    </location>
</feature>
<feature type="modified residue" description="Asymmetric dimethylarginine" evidence="1">
    <location>
        <position position="982"/>
    </location>
</feature>
<feature type="modified residue" description="Asymmetric dimethylarginine" evidence="1">
    <location>
        <position position="995"/>
    </location>
</feature>
<feature type="modified residue" description="Asymmetric dimethylarginine" evidence="1">
    <location>
        <position position="1008"/>
    </location>
</feature>
<feature type="modified residue" description="Asymmetric dimethylarginine" evidence="1">
    <location>
        <position position="1092"/>
    </location>
</feature>
<feature type="modified residue" description="Asymmetric dimethylarginine" evidence="1">
    <location>
        <position position="1103"/>
    </location>
</feature>
<feature type="cross-link" description="Glycyl lysine isopeptide (Lys-Gly) (interchain with G-Cter in SUMO2)" evidence="1">
    <location>
        <position position="291"/>
    </location>
</feature>
<feature type="cross-link" description="Glycyl lysine isopeptide (Lys-Gly) (interchain with G-Cter in SUMO2)" evidence="1">
    <location>
        <position position="329"/>
    </location>
</feature>
<feature type="cross-link" description="Glycyl lysine isopeptide (Lys-Gly) (interchain with G-Cter in SUMO2)" evidence="1">
    <location>
        <position position="457"/>
    </location>
</feature>
<feature type="cross-link" description="Glycyl lysine isopeptide (Lys-Gly) (interchain with G-Cter in SUMO2)" evidence="1">
    <location>
        <position position="654"/>
    </location>
</feature>
<feature type="cross-link" description="Glycyl lysine isopeptide (Lys-Gly) (interchain with G-Cter in SUMO2)" evidence="1">
    <location>
        <position position="723"/>
    </location>
</feature>
<feature type="cross-link" description="Glycyl lysine isopeptide (Lys-Gly) (interchain with G-Cter in SUMO2)" evidence="1">
    <location>
        <position position="1276"/>
    </location>
</feature>
<feature type="cross-link" description="Glycyl lysine isopeptide (Lys-Gly) (interchain with G-Cter in SUMO2)" evidence="1">
    <location>
        <position position="1417"/>
    </location>
</feature>
<feature type="cross-link" description="Glycyl lysine isopeptide (Lys-Gly) (interchain with G-Cter in SUMO2)" evidence="1">
    <location>
        <position position="1509"/>
    </location>
</feature>
<feature type="cross-link" description="Glycyl lysine isopeptide (Lys-Gly) (interchain with G-Cter in SUMO2)" evidence="1">
    <location>
        <position position="1522"/>
    </location>
</feature>
<feature type="cross-link" description="Glycyl lysine isopeptide (Lys-Gly) (interchain with G-Cter in SUMO2)" evidence="1">
    <location>
        <position position="1544"/>
    </location>
</feature>
<feature type="sequence conflict" description="In Ref. 1; BAD32313." evidence="6" ref="1">
    <original>E</original>
    <variation>Q</variation>
    <location>
        <position position="8"/>
    </location>
</feature>
<feature type="sequence conflict" description="In Ref. 4; BAE36275." evidence="6" ref="4">
    <original>E</original>
    <variation>G</variation>
    <location>
        <position position="428"/>
    </location>
</feature>
<feature type="sequence conflict" description="In Ref. 3; AAI50782." evidence="6" ref="3">
    <original>A</original>
    <variation>P</variation>
    <location>
        <position position="571"/>
    </location>
</feature>
<feature type="sequence conflict" description="In Ref. 3; AAI50782." evidence="6" ref="3">
    <original>G</original>
    <variation>A</variation>
    <location>
        <position position="1229"/>
    </location>
</feature>
<accession>G3X9Z4</accession>
<accession>B2RX07</accession>
<accession>F6UFZ5</accession>
<accession>Q3TT32</accession>
<accession>Q3TTQ0</accession>
<accession>Q69ZY3</accession>
<accession>Q8K0S1</accession>
<accession>Q8R2P5</accession>
<accession>Q99KH9</accession>
<proteinExistence type="evidence at transcript level"/>
<gene>
    <name evidence="7" type="primary">Pcf11</name>
    <name evidence="5" type="synonym">KIAA0824</name>
</gene>